<reference key="1">
    <citation type="journal article" date="2007" name="Nat. Biotechnol.">
        <title>Comparative analysis of the complete genome sequence of the plant growth-promoting bacterium Bacillus amyloliquefaciens FZB42.</title>
        <authorList>
            <person name="Chen X.H."/>
            <person name="Koumoutsi A."/>
            <person name="Scholz R."/>
            <person name="Eisenreich A."/>
            <person name="Schneider K."/>
            <person name="Heinemeyer I."/>
            <person name="Morgenstern B."/>
            <person name="Voss B."/>
            <person name="Hess W.R."/>
            <person name="Reva O."/>
            <person name="Junge H."/>
            <person name="Voigt B."/>
            <person name="Jungblut P.R."/>
            <person name="Vater J."/>
            <person name="Suessmuth R."/>
            <person name="Liesegang H."/>
            <person name="Strittmatter A."/>
            <person name="Gottschalk G."/>
            <person name="Borriss R."/>
        </authorList>
    </citation>
    <scope>NUCLEOTIDE SEQUENCE [LARGE SCALE GENOMIC DNA]</scope>
    <source>
        <strain>DSM 23117 / BGSC 10A6 / LMG 26770 / FZB42</strain>
    </source>
</reference>
<feature type="chain" id="PRO_0000388473" description="Sulfite reductase [NADPH] hemoprotein beta-component">
    <location>
        <begin position="1"/>
        <end position="571"/>
    </location>
</feature>
<feature type="binding site" evidence="1">
    <location>
        <position position="436"/>
    </location>
    <ligand>
        <name>[4Fe-4S] cluster</name>
        <dbReference type="ChEBI" id="CHEBI:49883"/>
    </ligand>
</feature>
<feature type="binding site" evidence="1">
    <location>
        <position position="442"/>
    </location>
    <ligand>
        <name>[4Fe-4S] cluster</name>
        <dbReference type="ChEBI" id="CHEBI:49883"/>
    </ligand>
</feature>
<feature type="binding site" evidence="1">
    <location>
        <position position="481"/>
    </location>
    <ligand>
        <name>[4Fe-4S] cluster</name>
        <dbReference type="ChEBI" id="CHEBI:49883"/>
    </ligand>
</feature>
<feature type="binding site" evidence="1">
    <location>
        <position position="485"/>
    </location>
    <ligand>
        <name>[4Fe-4S] cluster</name>
        <dbReference type="ChEBI" id="CHEBI:49883"/>
    </ligand>
</feature>
<feature type="binding site" description="axial binding residue" evidence="1">
    <location>
        <position position="485"/>
    </location>
    <ligand>
        <name>siroheme</name>
        <dbReference type="ChEBI" id="CHEBI:60052"/>
    </ligand>
    <ligandPart>
        <name>Fe</name>
        <dbReference type="ChEBI" id="CHEBI:18248"/>
    </ligandPart>
</feature>
<protein>
    <recommendedName>
        <fullName evidence="1">Sulfite reductase [NADPH] hemoprotein beta-component</fullName>
        <shortName evidence="1">SiR-HP</shortName>
        <shortName evidence="1">SiRHP</shortName>
        <ecNumber evidence="1">1.8.1.2</ecNumber>
    </recommendedName>
</protein>
<name>CYSI_BACVZ</name>
<sequence>MVNNILKAPEGPPSDVEEIKEKSDYLRGTLKEVMLDRISAGIPDDDNRLMKHHGSYLQDDRDLRNERQKQKLEPAYQFMLRVRMPGGVSTPEQWLVMDELAQKYGNNTLKLTTRETFQMHGILKWNMKKTIQKINAALLDTIAACGDVNRNVMCASNPHQSEIHAEVYEWSKKLSDDLLPRTRAYHEIWLDEERVAGTPDTETEPMYGPLYLPRKFKIGIAVPPSNDIDVYSQDLGFIAIVEEGRLIGFNVAIGGGMGMTHGDTATYPQLSKVIGFCKPEQLYDVAEKTITIQRDYGNRSVRKNARFKYTVDRLGLENVKAELENRLGWQLDEAKPYHFDHNGDRYGWVKGVKGKWHFTMFIEGGRVTDYENYKLMTGLREIAKVHTGDFRLTSNQNLIIGNVSSQKKKQISALIEQYGLTDGRQHSALRRSSMACVALPTCGLAMAEAERYLPKLIDKIEDIVDENGLRDEEITIRMTGCPNGCARHALGEIGFIGKAPGKYNMYLGAAFDGSRLSKMYRENIGEEEILSELRTILPRYAKEREEGEHFGDFVIRAGIIKATTDGTNFHE</sequence>
<comment type="function">
    <text evidence="1">Component of the sulfite reductase complex that catalyzes the 6-electron reduction of sulfite to sulfide. This is one of several activities required for the biosynthesis of L-cysteine from sulfate.</text>
</comment>
<comment type="catalytic activity">
    <reaction evidence="1">
        <text>hydrogen sulfide + 3 NADP(+) + 3 H2O = sulfite + 3 NADPH + 4 H(+)</text>
        <dbReference type="Rhea" id="RHEA:13801"/>
        <dbReference type="ChEBI" id="CHEBI:15377"/>
        <dbReference type="ChEBI" id="CHEBI:15378"/>
        <dbReference type="ChEBI" id="CHEBI:17359"/>
        <dbReference type="ChEBI" id="CHEBI:29919"/>
        <dbReference type="ChEBI" id="CHEBI:57783"/>
        <dbReference type="ChEBI" id="CHEBI:58349"/>
        <dbReference type="EC" id="1.8.1.2"/>
    </reaction>
</comment>
<comment type="cofactor">
    <cofactor evidence="1">
        <name>siroheme</name>
        <dbReference type="ChEBI" id="CHEBI:60052"/>
    </cofactor>
    <text evidence="1">Binds 1 siroheme per subunit.</text>
</comment>
<comment type="cofactor">
    <cofactor evidence="1">
        <name>[4Fe-4S] cluster</name>
        <dbReference type="ChEBI" id="CHEBI:49883"/>
    </cofactor>
    <text evidence="1">Binds 1 [4Fe-4S] cluster per subunit.</text>
</comment>
<comment type="pathway">
    <text evidence="1">Sulfur metabolism; hydrogen sulfide biosynthesis; hydrogen sulfide from sulfite (NADPH route): step 1/1.</text>
</comment>
<comment type="subunit">
    <text evidence="1">Alpha(8)-beta(8). The alpha component is a flavoprotein, the beta component is a hemoprotein.</text>
</comment>
<comment type="similarity">
    <text evidence="1">Belongs to the nitrite and sulfite reductase 4Fe-4S domain family.</text>
</comment>
<organism>
    <name type="scientific">Bacillus velezensis (strain DSM 23117 / BGSC 10A6 / LMG 26770 / FZB42)</name>
    <name type="common">Bacillus amyloliquefaciens subsp. plantarum</name>
    <dbReference type="NCBI Taxonomy" id="326423"/>
    <lineage>
        <taxon>Bacteria</taxon>
        <taxon>Bacillati</taxon>
        <taxon>Bacillota</taxon>
        <taxon>Bacilli</taxon>
        <taxon>Bacillales</taxon>
        <taxon>Bacillaceae</taxon>
        <taxon>Bacillus</taxon>
        <taxon>Bacillus amyloliquefaciens group</taxon>
    </lineage>
</organism>
<accession>A7Z8R5</accession>
<keyword id="KW-0004">4Fe-4S</keyword>
<keyword id="KW-0028">Amino-acid biosynthesis</keyword>
<keyword id="KW-0198">Cysteine biosynthesis</keyword>
<keyword id="KW-0349">Heme</keyword>
<keyword id="KW-0408">Iron</keyword>
<keyword id="KW-0411">Iron-sulfur</keyword>
<keyword id="KW-0479">Metal-binding</keyword>
<keyword id="KW-0521">NADP</keyword>
<keyword id="KW-0560">Oxidoreductase</keyword>
<gene>
    <name evidence="1" type="primary">cysI</name>
    <name type="ordered locus">RBAM_030600</name>
</gene>
<proteinExistence type="inferred from homology"/>
<evidence type="ECO:0000255" key="1">
    <source>
        <dbReference type="HAMAP-Rule" id="MF_01540"/>
    </source>
</evidence>
<dbReference type="EC" id="1.8.1.2" evidence="1"/>
<dbReference type="EMBL" id="CP000560">
    <property type="protein sequence ID" value="ABS75391.1"/>
    <property type="molecule type" value="Genomic_DNA"/>
</dbReference>
<dbReference type="RefSeq" id="WP_012118438.1">
    <property type="nucleotide sequence ID" value="NC_009725.2"/>
</dbReference>
<dbReference type="SMR" id="A7Z8R5"/>
<dbReference type="GeneID" id="93082203"/>
<dbReference type="KEGG" id="bay:RBAM_030600"/>
<dbReference type="HOGENOM" id="CLU_001975_3_2_9"/>
<dbReference type="UniPathway" id="UPA00140">
    <property type="reaction ID" value="UER00207"/>
</dbReference>
<dbReference type="Proteomes" id="UP000001120">
    <property type="component" value="Chromosome"/>
</dbReference>
<dbReference type="GO" id="GO:0009337">
    <property type="term" value="C:sulfite reductase complex (NADPH)"/>
    <property type="evidence" value="ECO:0007669"/>
    <property type="project" value="InterPro"/>
</dbReference>
<dbReference type="GO" id="GO:0051539">
    <property type="term" value="F:4 iron, 4 sulfur cluster binding"/>
    <property type="evidence" value="ECO:0007669"/>
    <property type="project" value="UniProtKB-KW"/>
</dbReference>
<dbReference type="GO" id="GO:0020037">
    <property type="term" value="F:heme binding"/>
    <property type="evidence" value="ECO:0007669"/>
    <property type="project" value="InterPro"/>
</dbReference>
<dbReference type="GO" id="GO:0046872">
    <property type="term" value="F:metal ion binding"/>
    <property type="evidence" value="ECO:0007669"/>
    <property type="project" value="UniProtKB-KW"/>
</dbReference>
<dbReference type="GO" id="GO:0050661">
    <property type="term" value="F:NADP binding"/>
    <property type="evidence" value="ECO:0007669"/>
    <property type="project" value="InterPro"/>
</dbReference>
<dbReference type="GO" id="GO:0050311">
    <property type="term" value="F:sulfite reductase (ferredoxin) activity"/>
    <property type="evidence" value="ECO:0007669"/>
    <property type="project" value="TreeGrafter"/>
</dbReference>
<dbReference type="GO" id="GO:0004783">
    <property type="term" value="F:sulfite reductase (NADPH) activity"/>
    <property type="evidence" value="ECO:0007669"/>
    <property type="project" value="UniProtKB-UniRule"/>
</dbReference>
<dbReference type="GO" id="GO:0019344">
    <property type="term" value="P:cysteine biosynthetic process"/>
    <property type="evidence" value="ECO:0007669"/>
    <property type="project" value="UniProtKB-KW"/>
</dbReference>
<dbReference type="GO" id="GO:0070814">
    <property type="term" value="P:hydrogen sulfide biosynthetic process"/>
    <property type="evidence" value="ECO:0007669"/>
    <property type="project" value="UniProtKB-UniRule"/>
</dbReference>
<dbReference type="GO" id="GO:0000103">
    <property type="term" value="P:sulfate assimilation"/>
    <property type="evidence" value="ECO:0007669"/>
    <property type="project" value="UniProtKB-UniRule"/>
</dbReference>
<dbReference type="FunFam" id="3.30.413.10:FF:000003">
    <property type="entry name" value="Sulfite reductase [NADPH] hemoprotein beta-component"/>
    <property type="match status" value="1"/>
</dbReference>
<dbReference type="FunFam" id="3.30.413.10:FF:000004">
    <property type="entry name" value="Sulfite reductase [NADPH] hemoprotein beta-component"/>
    <property type="match status" value="1"/>
</dbReference>
<dbReference type="Gene3D" id="3.30.413.10">
    <property type="entry name" value="Sulfite Reductase Hemoprotein, domain 1"/>
    <property type="match status" value="2"/>
</dbReference>
<dbReference type="HAMAP" id="MF_01540">
    <property type="entry name" value="CysI"/>
    <property type="match status" value="1"/>
</dbReference>
<dbReference type="InterPro" id="IPR011786">
    <property type="entry name" value="CysI"/>
</dbReference>
<dbReference type="InterPro" id="IPR005117">
    <property type="entry name" value="NiRdtase/SiRdtase_haem-b_fer"/>
</dbReference>
<dbReference type="InterPro" id="IPR036136">
    <property type="entry name" value="Nit/Sulf_reduc_fer-like_dom_sf"/>
</dbReference>
<dbReference type="InterPro" id="IPR006067">
    <property type="entry name" value="NO2/SO3_Rdtase_4Fe4S_dom"/>
</dbReference>
<dbReference type="InterPro" id="IPR045169">
    <property type="entry name" value="NO2/SO3_Rdtase_4Fe4S_prot"/>
</dbReference>
<dbReference type="InterPro" id="IPR045854">
    <property type="entry name" value="NO2/SO3_Rdtase_4Fe4S_sf"/>
</dbReference>
<dbReference type="InterPro" id="IPR006066">
    <property type="entry name" value="NO2/SO3_Rdtase_FeS/sirohaem_BS"/>
</dbReference>
<dbReference type="InterPro" id="IPR000626">
    <property type="entry name" value="Ubiquitin-like_dom"/>
</dbReference>
<dbReference type="NCBIfam" id="TIGR02041">
    <property type="entry name" value="CysI"/>
    <property type="match status" value="1"/>
</dbReference>
<dbReference type="NCBIfam" id="NF010029">
    <property type="entry name" value="PRK13504.1"/>
    <property type="match status" value="1"/>
</dbReference>
<dbReference type="PANTHER" id="PTHR11493:SF47">
    <property type="entry name" value="SULFITE REDUCTASE [NADPH] SUBUNIT BETA"/>
    <property type="match status" value="1"/>
</dbReference>
<dbReference type="PANTHER" id="PTHR11493">
    <property type="entry name" value="SULFITE REDUCTASE [NADPH] SUBUNIT BETA-RELATED"/>
    <property type="match status" value="1"/>
</dbReference>
<dbReference type="Pfam" id="PF01077">
    <property type="entry name" value="NIR_SIR"/>
    <property type="match status" value="1"/>
</dbReference>
<dbReference type="Pfam" id="PF03460">
    <property type="entry name" value="NIR_SIR_ferr"/>
    <property type="match status" value="2"/>
</dbReference>
<dbReference type="PRINTS" id="PR00397">
    <property type="entry name" value="SIROHAEM"/>
</dbReference>
<dbReference type="SUPFAM" id="SSF56014">
    <property type="entry name" value="Nitrite and sulphite reductase 4Fe-4S domain-like"/>
    <property type="match status" value="2"/>
</dbReference>
<dbReference type="SUPFAM" id="SSF55124">
    <property type="entry name" value="Nitrite/Sulfite reductase N-terminal domain-like"/>
    <property type="match status" value="2"/>
</dbReference>
<dbReference type="PROSITE" id="PS00365">
    <property type="entry name" value="NIR_SIR"/>
    <property type="match status" value="1"/>
</dbReference>